<proteinExistence type="inferred from homology"/>
<reference key="1">
    <citation type="submission" date="2009-01" db="EMBL/GenBank/DDBJ databases">
        <title>Complete sequence of chromosome of Caldicellulosiruptor becscii DSM 6725.</title>
        <authorList>
            <person name="Lucas S."/>
            <person name="Copeland A."/>
            <person name="Lapidus A."/>
            <person name="Glavina del Rio T."/>
            <person name="Tice H."/>
            <person name="Bruce D."/>
            <person name="Goodwin L."/>
            <person name="Pitluck S."/>
            <person name="Sims D."/>
            <person name="Meincke L."/>
            <person name="Brettin T."/>
            <person name="Detter J.C."/>
            <person name="Han C."/>
            <person name="Larimer F."/>
            <person name="Land M."/>
            <person name="Hauser L."/>
            <person name="Kyrpides N."/>
            <person name="Ovchinnikova G."/>
            <person name="Kataeva I."/>
            <person name="Adams M.W.W."/>
        </authorList>
    </citation>
    <scope>NUCLEOTIDE SEQUENCE [LARGE SCALE GENOMIC DNA]</scope>
    <source>
        <strain>ATCC BAA-1888 / DSM 6725 / KCTC 15123 / Z-1320</strain>
    </source>
</reference>
<evidence type="ECO:0000255" key="1">
    <source>
        <dbReference type="HAMAP-Rule" id="MF_01396"/>
    </source>
</evidence>
<keyword id="KW-0066">ATP synthesis</keyword>
<keyword id="KW-1003">Cell membrane</keyword>
<keyword id="KW-0138">CF(0)</keyword>
<keyword id="KW-0375">Hydrogen ion transport</keyword>
<keyword id="KW-0406">Ion transport</keyword>
<keyword id="KW-0446">Lipid-binding</keyword>
<keyword id="KW-0472">Membrane</keyword>
<keyword id="KW-0812">Transmembrane</keyword>
<keyword id="KW-1133">Transmembrane helix</keyword>
<keyword id="KW-0813">Transport</keyword>
<comment type="function">
    <text evidence="1">F(1)F(0) ATP synthase produces ATP from ADP in the presence of a proton or sodium gradient. F-type ATPases consist of two structural domains, F(1) containing the extramembraneous catalytic core and F(0) containing the membrane proton channel, linked together by a central stalk and a peripheral stalk. During catalysis, ATP synthesis in the catalytic domain of F(1) is coupled via a rotary mechanism of the central stalk subunits to proton translocation.</text>
</comment>
<comment type="function">
    <text evidence="1">Key component of the F(0) channel; it plays a direct role in translocation across the membrane. A homomeric c-ring of between 10-14 subunits forms the central stalk rotor element with the F(1) delta and epsilon subunits.</text>
</comment>
<comment type="subunit">
    <text evidence="1">F-type ATPases have 2 components, F(1) - the catalytic core - and F(0) - the membrane proton channel. F(1) has five subunits: alpha(3), beta(3), gamma(1), delta(1), epsilon(1). F(0) has three main subunits: a(1), b(2) and c(10-14). The alpha and beta chains form an alternating ring which encloses part of the gamma chain. F(1) is attached to F(0) by a central stalk formed by the gamma and epsilon chains, while a peripheral stalk is formed by the delta and b chains.</text>
</comment>
<comment type="subcellular location">
    <subcellularLocation>
        <location evidence="1">Cell membrane</location>
        <topology evidence="1">Multi-pass membrane protein</topology>
    </subcellularLocation>
</comment>
<comment type="similarity">
    <text evidence="1">Belongs to the ATPase C chain family.</text>
</comment>
<sequence length="70" mass="7005">MTALAAGIAMLAGLGVGIGIGIATGKASESIGRQPEAFGRIFPLFLIGAALAEAVAIYSLVIAFMLISKI</sequence>
<protein>
    <recommendedName>
        <fullName evidence="1">ATP synthase subunit c</fullName>
    </recommendedName>
    <alternativeName>
        <fullName evidence="1">ATP synthase F(0) sector subunit c</fullName>
    </alternativeName>
    <alternativeName>
        <fullName evidence="1">F-type ATPase subunit c</fullName>
        <shortName evidence="1">F-ATPase subunit c</shortName>
    </alternativeName>
    <alternativeName>
        <fullName evidence="1">Lipid-binding protein</fullName>
    </alternativeName>
</protein>
<name>ATPL_CALBD</name>
<dbReference type="EMBL" id="CP001393">
    <property type="protein sequence ID" value="ACM60527.1"/>
    <property type="molecule type" value="Genomic_DNA"/>
</dbReference>
<dbReference type="RefSeq" id="WP_013290424.1">
    <property type="nucleotide sequence ID" value="NC_012034.1"/>
</dbReference>
<dbReference type="SMR" id="B9MS73"/>
<dbReference type="STRING" id="521460.Athe_1429"/>
<dbReference type="GeneID" id="31772774"/>
<dbReference type="KEGG" id="ate:Athe_1429"/>
<dbReference type="eggNOG" id="COG0636">
    <property type="taxonomic scope" value="Bacteria"/>
</dbReference>
<dbReference type="HOGENOM" id="CLU_148047_2_1_9"/>
<dbReference type="Proteomes" id="UP000007723">
    <property type="component" value="Chromosome"/>
</dbReference>
<dbReference type="GO" id="GO:0005886">
    <property type="term" value="C:plasma membrane"/>
    <property type="evidence" value="ECO:0007669"/>
    <property type="project" value="UniProtKB-SubCell"/>
</dbReference>
<dbReference type="GO" id="GO:0045259">
    <property type="term" value="C:proton-transporting ATP synthase complex"/>
    <property type="evidence" value="ECO:0007669"/>
    <property type="project" value="UniProtKB-KW"/>
</dbReference>
<dbReference type="GO" id="GO:0033177">
    <property type="term" value="C:proton-transporting two-sector ATPase complex, proton-transporting domain"/>
    <property type="evidence" value="ECO:0007669"/>
    <property type="project" value="InterPro"/>
</dbReference>
<dbReference type="GO" id="GO:0008289">
    <property type="term" value="F:lipid binding"/>
    <property type="evidence" value="ECO:0007669"/>
    <property type="project" value="UniProtKB-KW"/>
</dbReference>
<dbReference type="GO" id="GO:0046933">
    <property type="term" value="F:proton-transporting ATP synthase activity, rotational mechanism"/>
    <property type="evidence" value="ECO:0007669"/>
    <property type="project" value="UniProtKB-UniRule"/>
</dbReference>
<dbReference type="FunFam" id="1.20.20.10:FF:000002">
    <property type="entry name" value="ATP synthase subunit c"/>
    <property type="match status" value="1"/>
</dbReference>
<dbReference type="Gene3D" id="1.20.20.10">
    <property type="entry name" value="F1F0 ATP synthase subunit C"/>
    <property type="match status" value="1"/>
</dbReference>
<dbReference type="HAMAP" id="MF_01396">
    <property type="entry name" value="ATP_synth_c_bact"/>
    <property type="match status" value="1"/>
</dbReference>
<dbReference type="InterPro" id="IPR005953">
    <property type="entry name" value="ATP_synth_csu_bac/chlpt"/>
</dbReference>
<dbReference type="InterPro" id="IPR000454">
    <property type="entry name" value="ATP_synth_F0_csu"/>
</dbReference>
<dbReference type="InterPro" id="IPR020537">
    <property type="entry name" value="ATP_synth_F0_csu_DDCD_BS"/>
</dbReference>
<dbReference type="InterPro" id="IPR038662">
    <property type="entry name" value="ATP_synth_F0_csu_sf"/>
</dbReference>
<dbReference type="InterPro" id="IPR002379">
    <property type="entry name" value="ATPase_proteolipid_c-like_dom"/>
</dbReference>
<dbReference type="InterPro" id="IPR035921">
    <property type="entry name" value="F/V-ATP_Csub_sf"/>
</dbReference>
<dbReference type="NCBIfam" id="TIGR01260">
    <property type="entry name" value="ATP_synt_c"/>
    <property type="match status" value="1"/>
</dbReference>
<dbReference type="Pfam" id="PF00137">
    <property type="entry name" value="ATP-synt_C"/>
    <property type="match status" value="1"/>
</dbReference>
<dbReference type="PRINTS" id="PR00124">
    <property type="entry name" value="ATPASEC"/>
</dbReference>
<dbReference type="SUPFAM" id="SSF81333">
    <property type="entry name" value="F1F0 ATP synthase subunit C"/>
    <property type="match status" value="1"/>
</dbReference>
<dbReference type="PROSITE" id="PS00605">
    <property type="entry name" value="ATPASE_C"/>
    <property type="match status" value="1"/>
</dbReference>
<accession>B9MS73</accession>
<feature type="chain" id="PRO_1000184317" description="ATP synthase subunit c">
    <location>
        <begin position="1"/>
        <end position="70"/>
    </location>
</feature>
<feature type="transmembrane region" description="Helical" evidence="1">
    <location>
        <begin position="3"/>
        <end position="23"/>
    </location>
</feature>
<feature type="transmembrane region" description="Helical" evidence="1">
    <location>
        <begin position="44"/>
        <end position="64"/>
    </location>
</feature>
<feature type="site" description="Reversibly protonated during proton transport" evidence="1">
    <location>
        <position position="53"/>
    </location>
</feature>
<gene>
    <name evidence="1" type="primary">atpE</name>
    <name type="ordered locus">Athe_1429</name>
</gene>
<organism>
    <name type="scientific">Caldicellulosiruptor bescii (strain ATCC BAA-1888 / DSM 6725 / KCTC 15123 / Z-1320)</name>
    <name type="common">Anaerocellum thermophilum</name>
    <dbReference type="NCBI Taxonomy" id="521460"/>
    <lineage>
        <taxon>Bacteria</taxon>
        <taxon>Bacillati</taxon>
        <taxon>Bacillota</taxon>
        <taxon>Bacillota incertae sedis</taxon>
        <taxon>Caldicellulosiruptorales</taxon>
        <taxon>Caldicellulosiruptoraceae</taxon>
        <taxon>Caldicellulosiruptor</taxon>
    </lineage>
</organism>